<proteinExistence type="evidence at protein level"/>
<accession>Q91XY4</accession>
<accession>Q80Y31</accession>
<name>PCDG4_MOUSE</name>
<gene>
    <name evidence="12" type="primary">Pcdhga4</name>
</gene>
<sequence length="930" mass="100358">MAAPYKSDRRGLIWICIFLGSLCDIRAEQIRYSVPEELERGSVVGNLAADLGLEPGKLAERGVRIVSRGKTQLFALNPRSGSLVTAGRVDREGLCDRSPKCTANLEILLEDKVRILAIEVEIIDVNDNAPSFGAQQREIKVAESENPGTRFPLPEAFDLDIGVNALQGYQLSSNDHFSLDVQSGPDGIKYPELVLENALDREEEAVHHLVLTAFDGGDPVRSGTATIQVTLVDTNDNAPVFTQPEYHISVKENLPVGTRLLTIKATDPDEGVNGEVTYSFRNVREKISQLFQLNSLTGDITVLGELDYEDSGFYDVDVEAHDGPGLRARSKVLVTVLDVNDNAPEVTVTSLTSSIQEASSPGTVIALFNVHDSDSGENGLVTCSIPDNLPFRLEKTYGNYHRLLIHRTLDREEVSDYNITITATDQGTPPLSTETYISLQVVDINDNPPTFTHASYSAYIPENNPRGASILSITAQDPDSGENAQVIYSLSEDTIQGAPMSSYVSINSNTGVLYALRSFDYEQFQDLKLLVTARDSGTPPLSSNVSLSLSVLDQNDNTPEILYPTIPTDGSTGVELTPRSADPGYLVTKVVAVDKDSGQNAWLSYRLLKASEPGLFSVGLHTGEVRTARALLDRDALKQSLVVTVQDHGQPPLSATVTLTIAVSDNIPDILADLVNINAPIDQEDSDITLYLVVAVAAVSCVFLAFVIVLLIHRLRRWHSTRLLQAAGNGLSSLPASHFVGVDGVHAFLQTYSHEVSLTADSGKSHLIFPQPNYADTLISQESCGKSDPLLVSQDLLEIKGDSSLQQAPPNTDWRFSQAQRPGTSGSQNGDETGTWPNNQFDTEMLQAMILASASEAADGSSTLGGGAGTMGLSARYGPQFTLQHVPDYRQNVYIPGSNATLTNAAGKRDGKAPAGGNGNKKKSGKKEKK</sequence>
<reference evidence="11" key="1">
    <citation type="journal article" date="2001" name="Genome Res.">
        <title>Comparative DNA sequence analysis of mouse and human protocadherin gene clusters.</title>
        <authorList>
            <person name="Wu Q."/>
            <person name="Zhang T."/>
            <person name="Cheng J.-F."/>
            <person name="Kim Y."/>
            <person name="Grimwood J."/>
            <person name="Schmutz J."/>
            <person name="Dickson M."/>
            <person name="Noonan J.P."/>
            <person name="Zhang M.Q."/>
            <person name="Myers R.M."/>
            <person name="Maniatis T."/>
        </authorList>
    </citation>
    <scope>NUCLEOTIDE SEQUENCE [MRNA]</scope>
    <source>
        <tissue evidence="11">Brain</tissue>
    </source>
</reference>
<reference evidence="10" key="2">
    <citation type="journal article" date="2004" name="Genome Res.">
        <title>The status, quality, and expansion of the NIH full-length cDNA project: the Mammalian Gene Collection (MGC).</title>
        <authorList>
            <consortium name="The MGC Project Team"/>
        </authorList>
    </citation>
    <scope>NUCLEOTIDE SEQUENCE [LARGE SCALE MRNA]</scope>
    <source>
        <tissue evidence="10">Limb</tissue>
    </source>
</reference>
<reference evidence="9" key="3">
    <citation type="journal article" date="2005" name="Mol. Cell. Neurosci.">
        <title>Differential expression of individual gamma-protocadherins during mouse brain development.</title>
        <authorList>
            <person name="Frank M."/>
            <person name="Ebert M."/>
            <person name="Shan W."/>
            <person name="Phillips G.R."/>
            <person name="Arndt K."/>
            <person name="Colman D.R."/>
            <person name="Kemler R."/>
        </authorList>
    </citation>
    <scope>DEVELOPMENTAL STAGE</scope>
</reference>
<reference evidence="9" key="4">
    <citation type="journal article" date="2009" name="J. Neurosci.">
        <title>Control of CNS synapse development by {gamma}-protocadherin-mediated astrocyte-neuron contact.</title>
        <authorList>
            <person name="Garrett A.M."/>
            <person name="Weiner J.A."/>
        </authorList>
    </citation>
    <scope>DEVELOPMENTAL STAGE</scope>
</reference>
<feature type="signal peptide" evidence="3">
    <location>
        <begin position="1"/>
        <end position="27"/>
    </location>
</feature>
<feature type="chain" id="PRO_0000423520" description="Protocadherin gamma-A4" evidence="3">
    <location>
        <begin position="28"/>
        <end position="930"/>
    </location>
</feature>
<feature type="topological domain" description="Extracellular" evidence="3">
    <location>
        <begin position="28"/>
        <end position="691"/>
    </location>
</feature>
<feature type="transmembrane region" description="Helical" evidence="3">
    <location>
        <begin position="692"/>
        <end position="712"/>
    </location>
</feature>
<feature type="topological domain" description="Cytoplasmic" evidence="3">
    <location>
        <begin position="713"/>
        <end position="930"/>
    </location>
</feature>
<feature type="domain" description="Cadherin 1" evidence="4">
    <location>
        <begin position="28"/>
        <end position="132"/>
    </location>
</feature>
<feature type="domain" description="Cadherin 2" evidence="4">
    <location>
        <begin position="133"/>
        <end position="241"/>
    </location>
</feature>
<feature type="domain" description="Cadherin 3" evidence="4">
    <location>
        <begin position="242"/>
        <end position="346"/>
    </location>
</feature>
<feature type="domain" description="Cadherin 4" evidence="4">
    <location>
        <begin position="347"/>
        <end position="451"/>
    </location>
</feature>
<feature type="domain" description="Cadherin 5" evidence="4">
    <location>
        <begin position="452"/>
        <end position="561"/>
    </location>
</feature>
<feature type="domain" description="Cadherin 6" evidence="4">
    <location>
        <begin position="569"/>
        <end position="682"/>
    </location>
</feature>
<feature type="region of interest" description="Disordered" evidence="5">
    <location>
        <begin position="803"/>
        <end position="839"/>
    </location>
</feature>
<feature type="region of interest" description="Disordered" evidence="5">
    <location>
        <begin position="900"/>
        <end position="930"/>
    </location>
</feature>
<feature type="compositionally biased region" description="Basic residues" evidence="5">
    <location>
        <begin position="920"/>
        <end position="930"/>
    </location>
</feature>
<feature type="glycosylation site" description="N-linked (GlcNAc...) asparagine" evidence="3">
    <location>
        <position position="418"/>
    </location>
</feature>
<feature type="glycosylation site" description="N-linked (GlcNAc...) asparagine" evidence="3">
    <location>
        <position position="544"/>
    </location>
</feature>
<feature type="sequence conflict" description="In Ref. 2; AAH49814." evidence="9" ref="2">
    <original>L</original>
    <variation>P</variation>
    <location>
        <position position="159"/>
    </location>
</feature>
<feature type="strand" evidence="13">
    <location>
        <begin position="240"/>
        <end position="251"/>
    </location>
</feature>
<feature type="strand" evidence="13">
    <location>
        <begin position="259"/>
        <end position="262"/>
    </location>
</feature>
<feature type="strand" evidence="13">
    <location>
        <begin position="277"/>
        <end position="282"/>
    </location>
</feature>
<feature type="helix" evidence="13">
    <location>
        <begin position="285"/>
        <end position="290"/>
    </location>
</feature>
<feature type="strand" evidence="13">
    <location>
        <begin position="291"/>
        <end position="293"/>
    </location>
</feature>
<feature type="turn" evidence="13">
    <location>
        <begin position="295"/>
        <end position="297"/>
    </location>
</feature>
<feature type="strand" evidence="13">
    <location>
        <begin position="299"/>
        <end position="304"/>
    </location>
</feature>
<feature type="turn" evidence="13">
    <location>
        <begin position="308"/>
        <end position="310"/>
    </location>
</feature>
<feature type="strand" evidence="13">
    <location>
        <begin position="312"/>
        <end position="321"/>
    </location>
</feature>
<feature type="strand" evidence="13">
    <location>
        <begin position="323"/>
        <end position="325"/>
    </location>
</feature>
<feature type="strand" evidence="13">
    <location>
        <begin position="328"/>
        <end position="337"/>
    </location>
</feature>
<feature type="strand" evidence="13">
    <location>
        <begin position="345"/>
        <end position="351"/>
    </location>
</feature>
<feature type="strand" evidence="13">
    <location>
        <begin position="366"/>
        <end position="371"/>
    </location>
</feature>
<feature type="helix" evidence="13">
    <location>
        <begin position="376"/>
        <end position="378"/>
    </location>
</feature>
<feature type="strand" evidence="13">
    <location>
        <begin position="381"/>
        <end position="384"/>
    </location>
</feature>
<feature type="strand" evidence="13">
    <location>
        <begin position="387"/>
        <end position="389"/>
    </location>
</feature>
<feature type="strand" evidence="13">
    <location>
        <begin position="392"/>
        <end position="397"/>
    </location>
</feature>
<feature type="strand" evidence="13">
    <location>
        <begin position="400"/>
        <end position="404"/>
    </location>
</feature>
<feature type="turn" evidence="13">
    <location>
        <begin position="411"/>
        <end position="413"/>
    </location>
</feature>
<feature type="strand" evidence="13">
    <location>
        <begin position="415"/>
        <end position="425"/>
    </location>
</feature>
<feature type="strand" evidence="13">
    <location>
        <begin position="427"/>
        <end position="429"/>
    </location>
</feature>
<feature type="strand" evidence="13">
    <location>
        <begin position="432"/>
        <end position="441"/>
    </location>
</feature>
<feature type="strand" evidence="13">
    <location>
        <begin position="450"/>
        <end position="463"/>
    </location>
</feature>
<feature type="strand" evidence="13">
    <location>
        <begin position="468"/>
        <end position="473"/>
    </location>
</feature>
<feature type="helix" evidence="13">
    <location>
        <begin position="481"/>
        <end position="484"/>
    </location>
</feature>
<feature type="strand" evidence="13">
    <location>
        <begin position="487"/>
        <end position="490"/>
    </location>
</feature>
<feature type="helix" evidence="13">
    <location>
        <begin position="500"/>
        <end position="502"/>
    </location>
</feature>
<feature type="strand" evidence="13">
    <location>
        <begin position="504"/>
        <end position="506"/>
    </location>
</feature>
<feature type="strand" evidence="13">
    <location>
        <begin position="508"/>
        <end position="517"/>
    </location>
</feature>
<feature type="turn" evidence="13">
    <location>
        <begin position="521"/>
        <end position="523"/>
    </location>
</feature>
<feature type="strand" evidence="13">
    <location>
        <begin position="526"/>
        <end position="534"/>
    </location>
</feature>
<feature type="strand" evidence="13">
    <location>
        <begin position="536"/>
        <end position="539"/>
    </location>
</feature>
<feature type="strand" evidence="13">
    <location>
        <begin position="543"/>
        <end position="552"/>
    </location>
</feature>
<feature type="strand" evidence="13">
    <location>
        <begin position="560"/>
        <end position="564"/>
    </location>
</feature>
<feature type="strand" evidence="13">
    <location>
        <begin position="573"/>
        <end position="577"/>
    </location>
</feature>
<feature type="strand" evidence="13">
    <location>
        <begin position="586"/>
        <end position="589"/>
    </location>
</feature>
<feature type="strand" evidence="13">
    <location>
        <begin position="591"/>
        <end position="593"/>
    </location>
</feature>
<feature type="helix" evidence="13">
    <location>
        <begin position="598"/>
        <end position="601"/>
    </location>
</feature>
<feature type="strand" evidence="13">
    <location>
        <begin position="603"/>
        <end position="612"/>
    </location>
</feature>
<feature type="strand" evidence="13">
    <location>
        <begin position="615"/>
        <end position="618"/>
    </location>
</feature>
<feature type="turn" evidence="13">
    <location>
        <begin position="620"/>
        <end position="622"/>
    </location>
</feature>
<feature type="strand" evidence="13">
    <location>
        <begin position="624"/>
        <end position="629"/>
    </location>
</feature>
<feature type="strand" evidence="13">
    <location>
        <begin position="637"/>
        <end position="647"/>
    </location>
</feature>
<feature type="strand" evidence="13">
    <location>
        <begin position="649"/>
        <end position="651"/>
    </location>
</feature>
<feature type="strand" evidence="13">
    <location>
        <begin position="654"/>
        <end position="663"/>
    </location>
</feature>
<dbReference type="EMBL" id="AY013798">
    <property type="protein sequence ID" value="AAK26087.1"/>
    <property type="molecule type" value="mRNA"/>
</dbReference>
<dbReference type="EMBL" id="BC049814">
    <property type="protein sequence ID" value="AAH49814.1"/>
    <property type="molecule type" value="mRNA"/>
</dbReference>
<dbReference type="CCDS" id="CCDS79625.1"/>
<dbReference type="RefSeq" id="NP_291065.3">
    <property type="nucleotide sequence ID" value="NM_033587.3"/>
</dbReference>
<dbReference type="PDB" id="5SZQ">
    <property type="method" value="X-ray"/>
    <property type="resolution" value="2.61 A"/>
    <property type="chains" value="A=237-669"/>
</dbReference>
<dbReference type="PDBsum" id="5SZQ"/>
<dbReference type="EMDB" id="EMD-9197"/>
<dbReference type="EMDB" id="EMD-9198"/>
<dbReference type="EMDB" id="EMD-9199"/>
<dbReference type="EMDB" id="EMD-9200"/>
<dbReference type="SMR" id="Q91XY4"/>
<dbReference type="BioGRID" id="220261">
    <property type="interactions" value="1"/>
</dbReference>
<dbReference type="FunCoup" id="Q91XY4">
    <property type="interactions" value="208"/>
</dbReference>
<dbReference type="STRING" id="10090.ENSMUSP00000142140"/>
<dbReference type="GlyCosmos" id="Q91XY4">
    <property type="glycosylation" value="2 sites, No reported glycans"/>
</dbReference>
<dbReference type="GlyGen" id="Q91XY4">
    <property type="glycosylation" value="2 sites"/>
</dbReference>
<dbReference type="iPTMnet" id="Q91XY4"/>
<dbReference type="PhosphoSitePlus" id="Q91XY4"/>
<dbReference type="ProteomicsDB" id="294343"/>
<dbReference type="Pumba" id="Q91XY4"/>
<dbReference type="Antibodypedia" id="60162">
    <property type="antibodies" value="38 antibodies from 10 providers"/>
</dbReference>
<dbReference type="DNASU" id="93712"/>
<dbReference type="Ensembl" id="ENSMUST00000194418.2">
    <property type="protein sequence ID" value="ENSMUSP00000142140.2"/>
    <property type="gene ID" value="ENSMUSG00000103677.2"/>
</dbReference>
<dbReference type="GeneID" id="93712"/>
<dbReference type="KEGG" id="mmu:93712"/>
<dbReference type="UCSC" id="uc008eqp.1">
    <property type="organism name" value="mouse"/>
</dbReference>
<dbReference type="AGR" id="MGI:1935216"/>
<dbReference type="CTD" id="56111"/>
<dbReference type="MGI" id="MGI:1935216">
    <property type="gene designation" value="Pcdhga4"/>
</dbReference>
<dbReference type="VEuPathDB" id="HostDB:ENSMUSG00000103677"/>
<dbReference type="GeneTree" id="ENSGT00940000163745"/>
<dbReference type="HOGENOM" id="CLU_006480_3_0_1"/>
<dbReference type="InParanoid" id="Q91XY4"/>
<dbReference type="OMA" id="IHITLMD"/>
<dbReference type="OrthoDB" id="72363at9989"/>
<dbReference type="BioGRID-ORCS" id="93712">
    <property type="hits" value="2 hits in 67 CRISPR screens"/>
</dbReference>
<dbReference type="PRO" id="PR:Q91XY4"/>
<dbReference type="Proteomes" id="UP000000589">
    <property type="component" value="Chromosome 18"/>
</dbReference>
<dbReference type="RNAct" id="Q91XY4">
    <property type="molecule type" value="protein"/>
</dbReference>
<dbReference type="Bgee" id="ENSMUSG00000103677">
    <property type="expression patterns" value="Expressed in cerebellar cortex and 52 other cell types or tissues"/>
</dbReference>
<dbReference type="ExpressionAtlas" id="Q91XY4">
    <property type="expression patterns" value="baseline and differential"/>
</dbReference>
<dbReference type="GO" id="GO:0016020">
    <property type="term" value="C:membrane"/>
    <property type="evidence" value="ECO:0000314"/>
    <property type="project" value="MGI"/>
</dbReference>
<dbReference type="GO" id="GO:0005886">
    <property type="term" value="C:plasma membrane"/>
    <property type="evidence" value="ECO:0007669"/>
    <property type="project" value="UniProtKB-SubCell"/>
</dbReference>
<dbReference type="GO" id="GO:0005509">
    <property type="term" value="F:calcium ion binding"/>
    <property type="evidence" value="ECO:0007669"/>
    <property type="project" value="InterPro"/>
</dbReference>
<dbReference type="GO" id="GO:0007156">
    <property type="term" value="P:homophilic cell adhesion via plasma membrane adhesion molecules"/>
    <property type="evidence" value="ECO:0007669"/>
    <property type="project" value="InterPro"/>
</dbReference>
<dbReference type="CDD" id="cd11304">
    <property type="entry name" value="Cadherin_repeat"/>
    <property type="match status" value="6"/>
</dbReference>
<dbReference type="FunFam" id="2.60.40.60:FF:000004">
    <property type="entry name" value="Protocadherin 1 gamma 2"/>
    <property type="match status" value="1"/>
</dbReference>
<dbReference type="FunFam" id="2.60.40.60:FF:000001">
    <property type="entry name" value="Protocadherin alpha 2"/>
    <property type="match status" value="1"/>
</dbReference>
<dbReference type="FunFam" id="2.60.40.60:FF:000002">
    <property type="entry name" value="Protocadherin alpha 2"/>
    <property type="match status" value="1"/>
</dbReference>
<dbReference type="FunFam" id="2.60.40.60:FF:000006">
    <property type="entry name" value="Protocadherin alpha 2"/>
    <property type="match status" value="1"/>
</dbReference>
<dbReference type="FunFam" id="2.60.40.60:FF:000129">
    <property type="entry name" value="protocadherin alpha-C2 isoform X1"/>
    <property type="match status" value="1"/>
</dbReference>
<dbReference type="FunFam" id="2.60.40.60:FF:000018">
    <property type="entry name" value="Protocadherin gamma c3"/>
    <property type="match status" value="1"/>
</dbReference>
<dbReference type="Gene3D" id="2.60.40.60">
    <property type="entry name" value="Cadherins"/>
    <property type="match status" value="6"/>
</dbReference>
<dbReference type="InterPro" id="IPR002126">
    <property type="entry name" value="Cadherin-like_dom"/>
</dbReference>
<dbReference type="InterPro" id="IPR015919">
    <property type="entry name" value="Cadherin-like_sf"/>
</dbReference>
<dbReference type="InterPro" id="IPR032455">
    <property type="entry name" value="Cadherin_C"/>
</dbReference>
<dbReference type="InterPro" id="IPR031904">
    <property type="entry name" value="Cadherin_CBD"/>
</dbReference>
<dbReference type="InterPro" id="IPR020894">
    <property type="entry name" value="Cadherin_CS"/>
</dbReference>
<dbReference type="InterPro" id="IPR013164">
    <property type="entry name" value="Cadherin_N"/>
</dbReference>
<dbReference type="InterPro" id="IPR050174">
    <property type="entry name" value="Protocadherin/Cadherin-CA"/>
</dbReference>
<dbReference type="PANTHER" id="PTHR24028">
    <property type="entry name" value="CADHERIN-87A"/>
    <property type="match status" value="1"/>
</dbReference>
<dbReference type="PANTHER" id="PTHR24028:SF94">
    <property type="entry name" value="PROTOCADHERIN GAMMA-A4"/>
    <property type="match status" value="1"/>
</dbReference>
<dbReference type="Pfam" id="PF00028">
    <property type="entry name" value="Cadherin"/>
    <property type="match status" value="5"/>
</dbReference>
<dbReference type="Pfam" id="PF08266">
    <property type="entry name" value="Cadherin_2"/>
    <property type="match status" value="1"/>
</dbReference>
<dbReference type="Pfam" id="PF16492">
    <property type="entry name" value="Cadherin_C_2"/>
    <property type="match status" value="1"/>
</dbReference>
<dbReference type="Pfam" id="PF15974">
    <property type="entry name" value="Cadherin_tail"/>
    <property type="match status" value="1"/>
</dbReference>
<dbReference type="PRINTS" id="PR00205">
    <property type="entry name" value="CADHERIN"/>
</dbReference>
<dbReference type="SMART" id="SM00112">
    <property type="entry name" value="CA"/>
    <property type="match status" value="6"/>
</dbReference>
<dbReference type="SUPFAM" id="SSF49313">
    <property type="entry name" value="Cadherin-like"/>
    <property type="match status" value="6"/>
</dbReference>
<dbReference type="PROSITE" id="PS00232">
    <property type="entry name" value="CADHERIN_1"/>
    <property type="match status" value="5"/>
</dbReference>
<dbReference type="PROSITE" id="PS50268">
    <property type="entry name" value="CADHERIN_2"/>
    <property type="match status" value="6"/>
</dbReference>
<organism>
    <name type="scientific">Mus musculus</name>
    <name type="common">Mouse</name>
    <dbReference type="NCBI Taxonomy" id="10090"/>
    <lineage>
        <taxon>Eukaryota</taxon>
        <taxon>Metazoa</taxon>
        <taxon>Chordata</taxon>
        <taxon>Craniata</taxon>
        <taxon>Vertebrata</taxon>
        <taxon>Euteleostomi</taxon>
        <taxon>Mammalia</taxon>
        <taxon>Eutheria</taxon>
        <taxon>Euarchontoglires</taxon>
        <taxon>Glires</taxon>
        <taxon>Rodentia</taxon>
        <taxon>Myomorpha</taxon>
        <taxon>Muroidea</taxon>
        <taxon>Muridae</taxon>
        <taxon>Murinae</taxon>
        <taxon>Mus</taxon>
        <taxon>Mus</taxon>
    </lineage>
</organism>
<comment type="function">
    <text evidence="2">Potential calcium-dependent cell-adhesion protein. May be involved in the establishment and maintenance of specific neuronal connections in the brain (By similarity).</text>
</comment>
<comment type="subcellular location">
    <subcellularLocation>
        <location evidence="1">Cell membrane</location>
        <topology evidence="1">Single-pass type I membrane protein</topology>
    </subcellularLocation>
</comment>
<comment type="developmental stage">
    <text evidence="6 7">Expressed in stage P0-P2 spinal astrocytes, stage P15 hippocampus where expression is detected in some pyramidal neurons, and stage P18 cerebellum where strong expression is detected in a few scattered Purkinje cells and weak expression in neighboring Purkinje cells.</text>
</comment>
<evidence type="ECO:0000250" key="1">
    <source>
        <dbReference type="UniProtKB" id="O88689"/>
    </source>
</evidence>
<evidence type="ECO:0000250" key="2">
    <source>
        <dbReference type="UniProtKB" id="Q9Y5H4"/>
    </source>
</evidence>
<evidence type="ECO:0000255" key="3"/>
<evidence type="ECO:0000255" key="4">
    <source>
        <dbReference type="PROSITE-ProRule" id="PRU00043"/>
    </source>
</evidence>
<evidence type="ECO:0000256" key="5">
    <source>
        <dbReference type="SAM" id="MobiDB-lite"/>
    </source>
</evidence>
<evidence type="ECO:0000269" key="6">
    <source>
    </source>
</evidence>
<evidence type="ECO:0000269" key="7">
    <source>
    </source>
</evidence>
<evidence type="ECO:0000303" key="8">
    <source>
    </source>
</evidence>
<evidence type="ECO:0000305" key="9"/>
<evidence type="ECO:0000312" key="10">
    <source>
        <dbReference type="EMBL" id="AAH49814.1"/>
    </source>
</evidence>
<evidence type="ECO:0000312" key="11">
    <source>
        <dbReference type="EMBL" id="AAK26087.1"/>
    </source>
</evidence>
<evidence type="ECO:0000312" key="12">
    <source>
        <dbReference type="MGI" id="MGI:1935216"/>
    </source>
</evidence>
<evidence type="ECO:0007829" key="13">
    <source>
        <dbReference type="PDB" id="5SZQ"/>
    </source>
</evidence>
<protein>
    <recommendedName>
        <fullName evidence="11">Protocadherin gamma-A4</fullName>
        <shortName evidence="8">PCDH-gamma-A4</shortName>
    </recommendedName>
</protein>
<keyword id="KW-0002">3D-structure</keyword>
<keyword id="KW-0106">Calcium</keyword>
<keyword id="KW-0130">Cell adhesion</keyword>
<keyword id="KW-1003">Cell membrane</keyword>
<keyword id="KW-0325">Glycoprotein</keyword>
<keyword id="KW-0472">Membrane</keyword>
<keyword id="KW-1185">Reference proteome</keyword>
<keyword id="KW-0677">Repeat</keyword>
<keyword id="KW-0732">Signal</keyword>
<keyword id="KW-0812">Transmembrane</keyword>
<keyword id="KW-1133">Transmembrane helix</keyword>